<dbReference type="EC" id="2.7.1.-" evidence="1"/>
<dbReference type="EMBL" id="AP008229">
    <property type="protein sequence ID" value="BAE70580.1"/>
    <property type="molecule type" value="Genomic_DNA"/>
</dbReference>
<dbReference type="SMR" id="Q2NYP7"/>
<dbReference type="KEGG" id="xom:XOO3825"/>
<dbReference type="HOGENOM" id="CLU_045532_1_1_6"/>
<dbReference type="GO" id="GO:0005737">
    <property type="term" value="C:cytoplasm"/>
    <property type="evidence" value="ECO:0007669"/>
    <property type="project" value="UniProtKB-SubCell"/>
</dbReference>
<dbReference type="GO" id="GO:0005886">
    <property type="term" value="C:plasma membrane"/>
    <property type="evidence" value="ECO:0007669"/>
    <property type="project" value="TreeGrafter"/>
</dbReference>
<dbReference type="GO" id="GO:0005524">
    <property type="term" value="F:ATP binding"/>
    <property type="evidence" value="ECO:0007669"/>
    <property type="project" value="UniProtKB-UniRule"/>
</dbReference>
<dbReference type="GO" id="GO:0001727">
    <property type="term" value="F:lipid kinase activity"/>
    <property type="evidence" value="ECO:0007669"/>
    <property type="project" value="UniProtKB-UniRule"/>
</dbReference>
<dbReference type="GO" id="GO:0000287">
    <property type="term" value="F:magnesium ion binding"/>
    <property type="evidence" value="ECO:0007669"/>
    <property type="project" value="UniProtKB-UniRule"/>
</dbReference>
<dbReference type="GO" id="GO:0008654">
    <property type="term" value="P:phospholipid biosynthetic process"/>
    <property type="evidence" value="ECO:0007669"/>
    <property type="project" value="UniProtKB-UniRule"/>
</dbReference>
<dbReference type="Gene3D" id="2.60.200.40">
    <property type="match status" value="1"/>
</dbReference>
<dbReference type="Gene3D" id="3.40.50.10330">
    <property type="entry name" value="Probable inorganic polyphosphate/atp-NAD kinase, domain 1"/>
    <property type="match status" value="1"/>
</dbReference>
<dbReference type="HAMAP" id="MF_01377">
    <property type="entry name" value="YegS"/>
    <property type="match status" value="1"/>
</dbReference>
<dbReference type="InterPro" id="IPR017438">
    <property type="entry name" value="ATP-NAD_kinase_N"/>
</dbReference>
<dbReference type="InterPro" id="IPR005218">
    <property type="entry name" value="Diacylglycerol/lipid_kinase"/>
</dbReference>
<dbReference type="InterPro" id="IPR001206">
    <property type="entry name" value="Diacylglycerol_kinase_cat_dom"/>
</dbReference>
<dbReference type="InterPro" id="IPR022433">
    <property type="entry name" value="Lip_kinase_YegS"/>
</dbReference>
<dbReference type="InterPro" id="IPR050187">
    <property type="entry name" value="Lipid_Phosphate_FormReg"/>
</dbReference>
<dbReference type="InterPro" id="IPR016064">
    <property type="entry name" value="NAD/diacylglycerol_kinase_sf"/>
</dbReference>
<dbReference type="InterPro" id="IPR045540">
    <property type="entry name" value="YegS/DAGK_C"/>
</dbReference>
<dbReference type="NCBIfam" id="TIGR03702">
    <property type="entry name" value="lip_kinase_YegS"/>
    <property type="match status" value="1"/>
</dbReference>
<dbReference type="NCBIfam" id="NF009602">
    <property type="entry name" value="PRK13054.1"/>
    <property type="match status" value="1"/>
</dbReference>
<dbReference type="NCBIfam" id="TIGR00147">
    <property type="entry name" value="YegS/Rv2252/BmrU family lipid kinase"/>
    <property type="match status" value="1"/>
</dbReference>
<dbReference type="PANTHER" id="PTHR12358:SF106">
    <property type="entry name" value="LIPID KINASE YEGS"/>
    <property type="match status" value="1"/>
</dbReference>
<dbReference type="PANTHER" id="PTHR12358">
    <property type="entry name" value="SPHINGOSINE KINASE"/>
    <property type="match status" value="1"/>
</dbReference>
<dbReference type="Pfam" id="PF00781">
    <property type="entry name" value="DAGK_cat"/>
    <property type="match status" value="1"/>
</dbReference>
<dbReference type="Pfam" id="PF19279">
    <property type="entry name" value="YegS_C"/>
    <property type="match status" value="1"/>
</dbReference>
<dbReference type="SMART" id="SM00046">
    <property type="entry name" value="DAGKc"/>
    <property type="match status" value="1"/>
</dbReference>
<dbReference type="SUPFAM" id="SSF111331">
    <property type="entry name" value="NAD kinase/diacylglycerol kinase-like"/>
    <property type="match status" value="1"/>
</dbReference>
<dbReference type="PROSITE" id="PS50146">
    <property type="entry name" value="DAGK"/>
    <property type="match status" value="1"/>
</dbReference>
<feature type="chain" id="PRO_0000292169" description="Probable lipid kinase YegS-like">
    <location>
        <begin position="1"/>
        <end position="309"/>
    </location>
</feature>
<feature type="domain" description="DAGKc" evidence="1">
    <location>
        <begin position="1"/>
        <end position="134"/>
    </location>
</feature>
<feature type="active site" description="Proton acceptor" evidence="1">
    <location>
        <position position="280"/>
    </location>
</feature>
<feature type="binding site" evidence="1">
    <location>
        <position position="39"/>
    </location>
    <ligand>
        <name>ATP</name>
        <dbReference type="ChEBI" id="CHEBI:30616"/>
    </ligand>
</feature>
<feature type="binding site" evidence="1">
    <location>
        <begin position="65"/>
        <end position="71"/>
    </location>
    <ligand>
        <name>ATP</name>
        <dbReference type="ChEBI" id="CHEBI:30616"/>
    </ligand>
</feature>
<feature type="binding site" evidence="1">
    <location>
        <position position="96"/>
    </location>
    <ligand>
        <name>ATP</name>
        <dbReference type="ChEBI" id="CHEBI:30616"/>
    </ligand>
</feature>
<feature type="binding site" evidence="1">
    <location>
        <position position="219"/>
    </location>
    <ligand>
        <name>Mg(2+)</name>
        <dbReference type="ChEBI" id="CHEBI:18420"/>
    </ligand>
</feature>
<feature type="binding site" evidence="1">
    <location>
        <position position="222"/>
    </location>
    <ligand>
        <name>Mg(2+)</name>
        <dbReference type="ChEBI" id="CHEBI:18420"/>
    </ligand>
</feature>
<feature type="binding site" evidence="1">
    <location>
        <position position="224"/>
    </location>
    <ligand>
        <name>Mg(2+)</name>
        <dbReference type="ChEBI" id="CHEBI:18420"/>
    </ligand>
</feature>
<name>YEGS_XANOM</name>
<proteinExistence type="inferred from homology"/>
<sequence>MAPSHWRLILNGKSTDNADLREAVGTLRKRGIQLDVRVTWEDGDAERYVSEAVADGVHTVVAAGGDGTLSEVAAALAHHERDAATLPSLGLVPLGTANDFATAANVPITPLDALTLIAERVAQPVDLLRIDAEHGPRWCANVASGGFGTQVTVETDEGLKKMLGGLAYLITGMSRLGRIDPIGARFNGPDFSWEGEFIALGLGNGRQAGGGQALCPEAVIDDGLLDVTIVPALDGEVAATLGTLVTGGKQAALERVAVRARVPWLEIVSNQPLTLNLDGEPETSRHFRIACVPARLRMHLPNDCPLLGR</sequence>
<gene>
    <name type="ordered locus">XOO3825</name>
</gene>
<accession>Q2NYP7</accession>
<reference key="1">
    <citation type="journal article" date="2005" name="Jpn. Agric. Res. Q.">
        <title>Genome sequence of Xanthomonas oryzae pv. oryzae suggests contribution of large numbers of effector genes and insertion sequences to its race diversity.</title>
        <authorList>
            <person name="Ochiai H."/>
            <person name="Inoue Y."/>
            <person name="Takeya M."/>
            <person name="Sasaki A."/>
            <person name="Kaku H."/>
        </authorList>
    </citation>
    <scope>NUCLEOTIDE SEQUENCE [LARGE SCALE GENOMIC DNA]</scope>
    <source>
        <strain>MAFF 311018</strain>
    </source>
</reference>
<evidence type="ECO:0000255" key="1">
    <source>
        <dbReference type="HAMAP-Rule" id="MF_01377"/>
    </source>
</evidence>
<organism>
    <name type="scientific">Xanthomonas oryzae pv. oryzae (strain MAFF 311018)</name>
    <dbReference type="NCBI Taxonomy" id="342109"/>
    <lineage>
        <taxon>Bacteria</taxon>
        <taxon>Pseudomonadati</taxon>
        <taxon>Pseudomonadota</taxon>
        <taxon>Gammaproteobacteria</taxon>
        <taxon>Lysobacterales</taxon>
        <taxon>Lysobacteraceae</taxon>
        <taxon>Xanthomonas</taxon>
    </lineage>
</organism>
<keyword id="KW-0067">ATP-binding</keyword>
<keyword id="KW-0963">Cytoplasm</keyword>
<keyword id="KW-0418">Kinase</keyword>
<keyword id="KW-0444">Lipid biosynthesis</keyword>
<keyword id="KW-0443">Lipid metabolism</keyword>
<keyword id="KW-0460">Magnesium</keyword>
<keyword id="KW-0479">Metal-binding</keyword>
<keyword id="KW-0547">Nucleotide-binding</keyword>
<keyword id="KW-0594">Phospholipid biosynthesis</keyword>
<keyword id="KW-1208">Phospholipid metabolism</keyword>
<keyword id="KW-0808">Transferase</keyword>
<comment type="function">
    <text evidence="1">Probably phosphorylates lipids; the in vivo substrate is unknown.</text>
</comment>
<comment type="cofactor">
    <cofactor evidence="1">
        <name>Mg(2+)</name>
        <dbReference type="ChEBI" id="CHEBI:18420"/>
    </cofactor>
    <cofactor evidence="1">
        <name>Ca(2+)</name>
        <dbReference type="ChEBI" id="CHEBI:29108"/>
    </cofactor>
    <text evidence="1">Binds 1 Mg(2+) ion per subunit. Ca(2+) may be able to substitute.</text>
</comment>
<comment type="subcellular location">
    <subcellularLocation>
        <location evidence="1">Cytoplasm</location>
    </subcellularLocation>
</comment>
<comment type="similarity">
    <text evidence="1">Belongs to the diacylglycerol/lipid kinase family. YegS lipid kinase subfamily.</text>
</comment>
<protein>
    <recommendedName>
        <fullName evidence="1">Probable lipid kinase YegS-like</fullName>
        <ecNumber evidence="1">2.7.1.-</ecNumber>
    </recommendedName>
</protein>